<feature type="initiator methionine" description="Removed" evidence="2">
    <location>
        <position position="1"/>
    </location>
</feature>
<feature type="chain" id="PRO_0000064262" description="Catenin alpha-1">
    <location>
        <begin position="2"/>
        <end position="906"/>
    </location>
</feature>
<feature type="region of interest" description="Involved in homodimerization" evidence="1">
    <location>
        <begin position="2"/>
        <end position="228"/>
    </location>
</feature>
<feature type="region of interest" description="Interaction with JUP and CTNNB1" evidence="1">
    <location>
        <begin position="97"/>
        <end position="148"/>
    </location>
</feature>
<feature type="region of interest" description="Interaction with alpha-actinin" evidence="1">
    <location>
        <begin position="325"/>
        <end position="394"/>
    </location>
</feature>
<feature type="region of interest" description="Disordered" evidence="4">
    <location>
        <begin position="864"/>
        <end position="894"/>
    </location>
</feature>
<feature type="compositionally biased region" description="Basic and acidic residues" evidence="4">
    <location>
        <begin position="864"/>
        <end position="880"/>
    </location>
</feature>
<feature type="compositionally biased region" description="Basic residues" evidence="4">
    <location>
        <begin position="881"/>
        <end position="891"/>
    </location>
</feature>
<feature type="modified residue" description="N-acetylthreonine" evidence="2">
    <location>
        <position position="2"/>
    </location>
</feature>
<feature type="modified residue" description="Phosphoserine" evidence="2">
    <location>
        <position position="264"/>
    </location>
</feature>
<feature type="modified residue" description="Phosphoserine" evidence="2">
    <location>
        <position position="295"/>
    </location>
</feature>
<feature type="modified residue" description="Phosphoserine" evidence="2">
    <location>
        <position position="297"/>
    </location>
</feature>
<feature type="modified residue" description="Phosphothreonine" evidence="23">
    <location>
        <position position="634"/>
    </location>
</feature>
<feature type="modified residue" description="Phosphoserine" evidence="21 22 23">
    <location>
        <position position="641"/>
    </location>
</feature>
<feature type="modified residue" description="Phosphothreonine" evidence="23">
    <location>
        <position position="645"/>
    </location>
</feature>
<feature type="modified residue" description="Phosphoserine" evidence="23">
    <location>
        <position position="652"/>
    </location>
</feature>
<feature type="modified residue" description="Phosphoserine" evidence="23">
    <location>
        <position position="655"/>
    </location>
</feature>
<feature type="modified residue" description="Phosphothreonine" evidence="23">
    <location>
        <position position="658"/>
    </location>
</feature>
<feature type="modified residue" description="Phosphoserine" evidence="2">
    <location>
        <position position="851"/>
    </location>
</feature>
<feature type="cross-link" description="Glycyl lysine isopeptide (Lys-Gly) (interchain with G-Cter in SUMO2)" evidence="2">
    <location>
        <position position="57"/>
    </location>
</feature>
<feature type="cross-link" description="Glycyl lysine isopeptide (Lys-Gly) (interchain with G-Cter in SUMO2)" evidence="2">
    <location>
        <position position="797"/>
    </location>
</feature>
<feature type="mutagenesis site" description="Mice bearing this mutation exhibit several retinal pigment epithelium (RPE) anomalies, including pigmentary abnormalities, focal thickening, elevated lesions, and decreased light-activated responses. Mutant animals show dysmorphology in the form of RPE cell shedding and accumulation of large multinucleated RPE cells." evidence="15">
    <original>L</original>
    <variation>P</variation>
    <location>
        <position position="436"/>
    </location>
</feature>
<feature type="mutagenesis site" description="No effect on cell aggregation or E-cadherin/catenin complex assembly. Decreases strength of cell-cell adhesion." evidence="14">
    <original>SDFETEDFDVRSRTSVQT</original>
    <variation>ADFETEDFDVRARAAVQA</variation>
    <location>
        <begin position="641"/>
        <end position="658"/>
    </location>
</feature>
<feature type="mutagenesis site" description="No effect on cell aggregation or E-cadherin/catenin complex assembly. Increases strength of cell-cell adhesion." evidence="14">
    <original>SDFETEDFDVRSRTSVQT</original>
    <variation>EDFETEDFDVREREEVQE</variation>
    <location>
        <begin position="641"/>
        <end position="658"/>
    </location>
</feature>
<feature type="mutagenesis site" description="No effect on cell aggregation or E-cadherin/catenin complex assembly. Decreases strength of cell-cell adhesion." evidence="14">
    <original>S</original>
    <variation>A</variation>
    <location>
        <position position="641"/>
    </location>
</feature>
<feature type="mutagenesis site" description="No effect on cell aggregation or E-cadherin/catenin complex assembly. Increases strength of cell-cell adhesion." evidence="14">
    <original>S</original>
    <variation>E</variation>
    <location>
        <position position="641"/>
    </location>
</feature>
<feature type="helix" evidence="24">
    <location>
        <begin position="59"/>
        <end position="82"/>
    </location>
</feature>
<feature type="strand" evidence="24">
    <location>
        <begin position="84"/>
        <end position="86"/>
    </location>
</feature>
<feature type="helix" evidence="24">
    <location>
        <begin position="87"/>
        <end position="113"/>
    </location>
</feature>
<feature type="helix" evidence="24">
    <location>
        <begin position="118"/>
        <end position="165"/>
    </location>
</feature>
<feature type="helix" evidence="24">
    <location>
        <begin position="170"/>
        <end position="195"/>
    </location>
</feature>
<feature type="helix" evidence="24">
    <location>
        <begin position="201"/>
        <end position="230"/>
    </location>
</feature>
<feature type="helix" evidence="24">
    <location>
        <begin position="235"/>
        <end position="259"/>
    </location>
</feature>
<feature type="helix" evidence="27">
    <location>
        <begin position="305"/>
        <end position="315"/>
    </location>
</feature>
<feature type="helix" evidence="26">
    <location>
        <begin position="328"/>
        <end position="352"/>
    </location>
</feature>
<feature type="helix" evidence="28">
    <location>
        <begin position="360"/>
        <end position="368"/>
    </location>
</feature>
<feature type="turn" evidence="28">
    <location>
        <begin position="369"/>
        <end position="372"/>
    </location>
</feature>
<feature type="helix" evidence="25">
    <location>
        <begin position="392"/>
        <end position="396"/>
    </location>
</feature>
<feature type="helix" evidence="25">
    <location>
        <begin position="399"/>
        <end position="409"/>
    </location>
</feature>
<feature type="helix" evidence="25">
    <location>
        <begin position="413"/>
        <end position="440"/>
    </location>
</feature>
<feature type="helix" evidence="25">
    <location>
        <begin position="444"/>
        <end position="473"/>
    </location>
</feature>
<feature type="helix" evidence="25">
    <location>
        <begin position="478"/>
        <end position="506"/>
    </location>
</feature>
<feature type="helix" evidence="25">
    <location>
        <begin position="508"/>
        <end position="531"/>
    </location>
</feature>
<feature type="helix" evidence="25">
    <location>
        <begin position="535"/>
        <end position="560"/>
    </location>
</feature>
<feature type="helix" evidence="25">
    <location>
        <begin position="567"/>
        <end position="581"/>
    </location>
</feature>
<feature type="helix" evidence="25">
    <location>
        <begin position="583"/>
        <end position="598"/>
    </location>
</feature>
<feature type="helix" evidence="25">
    <location>
        <begin position="608"/>
        <end position="629"/>
    </location>
</feature>
<feature type="strand" evidence="29">
    <location>
        <begin position="652"/>
        <end position="654"/>
    </location>
</feature>
<feature type="turn" evidence="29">
    <location>
        <begin position="659"/>
        <end position="661"/>
    </location>
</feature>
<feature type="helix" evidence="29">
    <location>
        <begin position="669"/>
        <end position="675"/>
    </location>
</feature>
<feature type="helix" evidence="29">
    <location>
        <begin position="678"/>
        <end position="702"/>
    </location>
</feature>
<feature type="helix" evidence="29">
    <location>
        <begin position="711"/>
        <end position="730"/>
    </location>
</feature>
<feature type="helix" evidence="29">
    <location>
        <begin position="739"/>
        <end position="765"/>
    </location>
</feature>
<feature type="helix" evidence="29">
    <location>
        <begin position="770"/>
        <end position="793"/>
    </location>
</feature>
<feature type="strand" evidence="29">
    <location>
        <begin position="799"/>
        <end position="803"/>
    </location>
</feature>
<feature type="strand" evidence="29">
    <location>
        <begin position="806"/>
        <end position="810"/>
    </location>
</feature>
<feature type="helix" evidence="29">
    <location>
        <begin position="812"/>
        <end position="840"/>
    </location>
</feature>
<sequence>MTAVHAGNINFKWDPKSLEIRTLAVERLLEPLVTQVTTLVNTNSKGPSNKKRGRSKKAHVLAASVEQATENFLEKGDKIAKESQFLKEELVVAVEDVRKQGDLMKSAAGEFADDPCSSVKRGNMVRAARALLSAVTRLLILADMADVYKLLVQLKVVEDGILKLRNAGNEQDLGIQYKALKPEVDKLNIMAAKRQQELKDVGNRDQMAAARGILQKNVPILYTASQACLQHPDVAAYKANRDLIYKQLQQAVTGISNAAQATASDDAAQHQGGSGGELAYALNNFDKQIIVDPLSFSEERFRPSLEERLESIISGAALMADSSCTRDDRRERIVAECNAVRQALQDLLSEYMGNAGRKERSDALNSAIDKMTKKTRDLRRQLRKAVMDHVSDSFLETNVPLLVLIEAAKNGNEKEVKEYAQVFREHANKLIEVANLACSISNNEEGVKLVRMSASQLEALCPQVINAALALAAKPQSKLAQENMDLFKEQWEKQVRVLTDAVDDITSIDDFLAVSENHILEDVNKCVIALQEKDVDGLDRTAGAIRGRAARVIHVVTSEMDNYEPGVYTEKVLEATKLLSNTVMPRFTEQVEAAVEALSSDPAQPMDENEFIDASRLVYDGIRDIRKAVLMIRTPEELDDSDFETEDFDVRSRTSVQTEDDQLIAGQSARAIMAQLPQEQKAKIAEQVASFQEEKSKLDAEVSKWDDSGNDIIVLAKQMCMIMMEMTDFTRGKGPLKNTSDVISAAKKIAEAGSRMDKLGRTIADHCPDSACKQDLLAYLQRIALYCHQLNICSKVKAEVQNLGGELVVSGVDSAMSLIQAAKNLMNAVVQTVKASYVASTKYQKSQGMASLNLPAVSWKMKAPEKKPLVKREKQDETQTKIKRASQKKHVNPVQALSEFKAMDSI</sequence>
<dbReference type="EMBL" id="X59990">
    <property type="protein sequence ID" value="CAA42607.1"/>
    <property type="molecule type" value="mRNA"/>
</dbReference>
<dbReference type="EMBL" id="D90362">
    <property type="protein sequence ID" value="BAA14376.1"/>
    <property type="molecule type" value="mRNA"/>
</dbReference>
<dbReference type="EMBL" id="BC048163">
    <property type="protein sequence ID" value="AAH48163.1"/>
    <property type="molecule type" value="mRNA"/>
</dbReference>
<dbReference type="CCDS" id="CCDS29139.1"/>
<dbReference type="PIR" id="A39529">
    <property type="entry name" value="A39529"/>
</dbReference>
<dbReference type="RefSeq" id="NP_033948.1">
    <property type="nucleotide sequence ID" value="NM_009818.1"/>
</dbReference>
<dbReference type="RefSeq" id="XP_011245120.1">
    <property type="nucleotide sequence ID" value="XM_011246818.2"/>
</dbReference>
<dbReference type="RefSeq" id="XP_030106159.1">
    <property type="nucleotide sequence ID" value="XM_030250299.1"/>
</dbReference>
<dbReference type="PDB" id="1DOV">
    <property type="method" value="X-ray"/>
    <property type="resolution" value="3.00 A"/>
    <property type="chains" value="A=82-262"/>
</dbReference>
<dbReference type="PDB" id="1DOW">
    <property type="method" value="X-ray"/>
    <property type="resolution" value="1.80 A"/>
    <property type="chains" value="A=57-261"/>
</dbReference>
<dbReference type="PDB" id="1L7C">
    <property type="method" value="X-ray"/>
    <property type="resolution" value="2.50 A"/>
    <property type="chains" value="A/B/C=385-651"/>
</dbReference>
<dbReference type="PDB" id="4E17">
    <property type="method" value="X-ray"/>
    <property type="resolution" value="2.30 A"/>
    <property type="chains" value="B=321-356"/>
</dbReference>
<dbReference type="PDB" id="4E18">
    <property type="method" value="X-ray"/>
    <property type="resolution" value="2.40 A"/>
    <property type="chains" value="B=302-356"/>
</dbReference>
<dbReference type="PDB" id="4K1N">
    <property type="method" value="X-ray"/>
    <property type="resolution" value="6.50 A"/>
    <property type="chains" value="A/B=1-906"/>
</dbReference>
<dbReference type="PDB" id="5Y04">
    <property type="method" value="X-ray"/>
    <property type="resolution" value="2.85 A"/>
    <property type="chains" value="B=276-375"/>
</dbReference>
<dbReference type="PDB" id="6DV1">
    <property type="method" value="X-ray"/>
    <property type="resolution" value="2.20 A"/>
    <property type="chains" value="A/B=652-906"/>
</dbReference>
<dbReference type="PDB" id="6O3E">
    <property type="method" value="X-ray"/>
    <property type="resolution" value="4.00 A"/>
    <property type="chains" value="A/B=82-883"/>
</dbReference>
<dbReference type="PDB" id="6WVT">
    <property type="method" value="EM"/>
    <property type="resolution" value="3.56 A"/>
    <property type="chains" value="K/L/N/O/Q/X=671-906"/>
</dbReference>
<dbReference type="PDB" id="9DVA">
    <property type="method" value="EM"/>
    <property type="resolution" value="3.10 A"/>
    <property type="chains" value="F/H=1-906"/>
</dbReference>
<dbReference type="PDBsum" id="1DOV"/>
<dbReference type="PDBsum" id="1DOW"/>
<dbReference type="PDBsum" id="1L7C"/>
<dbReference type="PDBsum" id="4E17"/>
<dbReference type="PDBsum" id="4E18"/>
<dbReference type="PDBsum" id="4K1N"/>
<dbReference type="PDBsum" id="5Y04"/>
<dbReference type="PDBsum" id="6DV1"/>
<dbReference type="PDBsum" id="6O3E"/>
<dbReference type="PDBsum" id="6WVT"/>
<dbReference type="PDBsum" id="9DVA"/>
<dbReference type="EMDB" id="EMD-21925"/>
<dbReference type="EMDB" id="EMD-47194"/>
<dbReference type="SMR" id="P26231"/>
<dbReference type="BioGRID" id="198510">
    <property type="interactions" value="33"/>
</dbReference>
<dbReference type="CORUM" id="P26231"/>
<dbReference type="DIP" id="DIP-35299N"/>
<dbReference type="FunCoup" id="P26231">
    <property type="interactions" value="2272"/>
</dbReference>
<dbReference type="IntAct" id="P26231">
    <property type="interactions" value="19"/>
</dbReference>
<dbReference type="MINT" id="P26231"/>
<dbReference type="STRING" id="10090.ENSMUSP00000049007"/>
<dbReference type="ChEMBL" id="CHEMBL4879433"/>
<dbReference type="GlyGen" id="P26231">
    <property type="glycosylation" value="1 site, 1 O-linked glycan (1 site)"/>
</dbReference>
<dbReference type="iPTMnet" id="P26231"/>
<dbReference type="PhosphoSitePlus" id="P26231"/>
<dbReference type="SwissPalm" id="P26231"/>
<dbReference type="jPOST" id="P26231"/>
<dbReference type="PaxDb" id="10090-ENSMUSP00000049007"/>
<dbReference type="PeptideAtlas" id="P26231"/>
<dbReference type="ProteomicsDB" id="277921"/>
<dbReference type="Pumba" id="P26231"/>
<dbReference type="Antibodypedia" id="3431">
    <property type="antibodies" value="783 antibodies from 44 providers"/>
</dbReference>
<dbReference type="DNASU" id="12385"/>
<dbReference type="Ensembl" id="ENSMUST00000042345.8">
    <property type="protein sequence ID" value="ENSMUSP00000049007.7"/>
    <property type="gene ID" value="ENSMUSG00000037815.8"/>
</dbReference>
<dbReference type="GeneID" id="12385"/>
<dbReference type="KEGG" id="mmu:12385"/>
<dbReference type="UCSC" id="uc008ely.1">
    <property type="organism name" value="mouse"/>
</dbReference>
<dbReference type="AGR" id="MGI:88274"/>
<dbReference type="CTD" id="1495"/>
<dbReference type="MGI" id="MGI:88274">
    <property type="gene designation" value="Ctnna1"/>
</dbReference>
<dbReference type="VEuPathDB" id="HostDB:ENSMUSG00000037815"/>
<dbReference type="eggNOG" id="KOG3681">
    <property type="taxonomic scope" value="Eukaryota"/>
</dbReference>
<dbReference type="GeneTree" id="ENSGT01030000234543"/>
<dbReference type="HOGENOM" id="CLU_015314_2_0_1"/>
<dbReference type="InParanoid" id="P26231"/>
<dbReference type="OMA" id="QENMDMF"/>
<dbReference type="OrthoDB" id="6376697at2759"/>
<dbReference type="PhylomeDB" id="P26231"/>
<dbReference type="TreeFam" id="TF313686"/>
<dbReference type="Reactome" id="R-MMU-418990">
    <property type="pathway name" value="Adherens junctions interactions"/>
</dbReference>
<dbReference type="Reactome" id="R-MMU-5218920">
    <property type="pathway name" value="VEGFR2 mediated vascular permeability"/>
</dbReference>
<dbReference type="Reactome" id="R-MMU-525793">
    <property type="pathway name" value="Myogenesis"/>
</dbReference>
<dbReference type="Reactome" id="R-MMU-5626467">
    <property type="pathway name" value="RHO GTPases activate IQGAPs"/>
</dbReference>
<dbReference type="BioGRID-ORCS" id="12385">
    <property type="hits" value="6 hits in 79 CRISPR screens"/>
</dbReference>
<dbReference type="CD-CODE" id="CE726F99">
    <property type="entry name" value="Postsynaptic density"/>
</dbReference>
<dbReference type="ChiTaRS" id="Ctnna1">
    <property type="organism name" value="mouse"/>
</dbReference>
<dbReference type="EvolutionaryTrace" id="P26231"/>
<dbReference type="PRO" id="PR:P26231"/>
<dbReference type="Proteomes" id="UP000000589">
    <property type="component" value="Chromosome 18"/>
</dbReference>
<dbReference type="RNAct" id="P26231">
    <property type="molecule type" value="protein"/>
</dbReference>
<dbReference type="Bgee" id="ENSMUSG00000037815">
    <property type="expression patterns" value="Expressed in renal medulla collecting duct and 285 other cell types or tissues"/>
</dbReference>
<dbReference type="ExpressionAtlas" id="P26231">
    <property type="expression patterns" value="baseline and differential"/>
</dbReference>
<dbReference type="GO" id="GO:0001669">
    <property type="term" value="C:acrosomal vesicle"/>
    <property type="evidence" value="ECO:0007669"/>
    <property type="project" value="Ensembl"/>
</dbReference>
<dbReference type="GO" id="GO:0015629">
    <property type="term" value="C:actin cytoskeleton"/>
    <property type="evidence" value="ECO:0007669"/>
    <property type="project" value="InterPro"/>
</dbReference>
<dbReference type="GO" id="GO:0005912">
    <property type="term" value="C:adherens junction"/>
    <property type="evidence" value="ECO:0000314"/>
    <property type="project" value="MGI"/>
</dbReference>
<dbReference type="GO" id="GO:0016342">
    <property type="term" value="C:catenin complex"/>
    <property type="evidence" value="ECO:0007669"/>
    <property type="project" value="Ensembl"/>
</dbReference>
<dbReference type="GO" id="GO:0016600">
    <property type="term" value="C:flotillin complex"/>
    <property type="evidence" value="ECO:0000314"/>
    <property type="project" value="UniProtKB"/>
</dbReference>
<dbReference type="GO" id="GO:0005794">
    <property type="term" value="C:Golgi apparatus"/>
    <property type="evidence" value="ECO:0007669"/>
    <property type="project" value="Ensembl"/>
</dbReference>
<dbReference type="GO" id="GO:0014704">
    <property type="term" value="C:intercalated disc"/>
    <property type="evidence" value="ECO:0000314"/>
    <property type="project" value="MGI"/>
</dbReference>
<dbReference type="GO" id="GO:0030027">
    <property type="term" value="C:lamellipodium"/>
    <property type="evidence" value="ECO:0000314"/>
    <property type="project" value="MGI"/>
</dbReference>
<dbReference type="GO" id="GO:0005634">
    <property type="term" value="C:nucleus"/>
    <property type="evidence" value="ECO:0007669"/>
    <property type="project" value="UniProtKB-SubCell"/>
</dbReference>
<dbReference type="GO" id="GO:0005886">
    <property type="term" value="C:plasma membrane"/>
    <property type="evidence" value="ECO:0000314"/>
    <property type="project" value="MGI"/>
</dbReference>
<dbReference type="GO" id="GO:0005915">
    <property type="term" value="C:zonula adherens"/>
    <property type="evidence" value="ECO:0000314"/>
    <property type="project" value="MGI"/>
</dbReference>
<dbReference type="GO" id="GO:0051015">
    <property type="term" value="F:actin filament binding"/>
    <property type="evidence" value="ECO:0000314"/>
    <property type="project" value="MGI"/>
</dbReference>
<dbReference type="GO" id="GO:0008013">
    <property type="term" value="F:beta-catenin binding"/>
    <property type="evidence" value="ECO:0007669"/>
    <property type="project" value="Ensembl"/>
</dbReference>
<dbReference type="GO" id="GO:0045296">
    <property type="term" value="F:cadherin binding"/>
    <property type="evidence" value="ECO:0007669"/>
    <property type="project" value="Ensembl"/>
</dbReference>
<dbReference type="GO" id="GO:0045295">
    <property type="term" value="F:gamma-catenin binding"/>
    <property type="evidence" value="ECO:0007669"/>
    <property type="project" value="Ensembl"/>
</dbReference>
<dbReference type="GO" id="GO:0042802">
    <property type="term" value="F:identical protein binding"/>
    <property type="evidence" value="ECO:0000353"/>
    <property type="project" value="IntAct"/>
</dbReference>
<dbReference type="GO" id="GO:0005198">
    <property type="term" value="F:structural molecule activity"/>
    <property type="evidence" value="ECO:0007669"/>
    <property type="project" value="InterPro"/>
</dbReference>
<dbReference type="GO" id="GO:0017166">
    <property type="term" value="F:vinculin binding"/>
    <property type="evidence" value="ECO:0007669"/>
    <property type="project" value="Ensembl"/>
</dbReference>
<dbReference type="GO" id="GO:0043297">
    <property type="term" value="P:apical junction assembly"/>
    <property type="evidence" value="ECO:0000315"/>
    <property type="project" value="MGI"/>
</dbReference>
<dbReference type="GO" id="GO:0006915">
    <property type="term" value="P:apoptotic process"/>
    <property type="evidence" value="ECO:0000315"/>
    <property type="project" value="MGI"/>
</dbReference>
<dbReference type="GO" id="GO:0031103">
    <property type="term" value="P:axon regeneration"/>
    <property type="evidence" value="ECO:0007669"/>
    <property type="project" value="Ensembl"/>
</dbReference>
<dbReference type="GO" id="GO:0048870">
    <property type="term" value="P:cell motility"/>
    <property type="evidence" value="ECO:0000315"/>
    <property type="project" value="MGI"/>
</dbReference>
<dbReference type="GO" id="GO:0071681">
    <property type="term" value="P:cellular response to indole-3-methanol"/>
    <property type="evidence" value="ECO:0007669"/>
    <property type="project" value="Ensembl"/>
</dbReference>
<dbReference type="GO" id="GO:0090136">
    <property type="term" value="P:epithelial cell-cell adhesion"/>
    <property type="evidence" value="ECO:0000315"/>
    <property type="project" value="MGI"/>
</dbReference>
<dbReference type="GO" id="GO:0007163">
    <property type="term" value="P:establishment or maintenance of cell polarity"/>
    <property type="evidence" value="ECO:0000315"/>
    <property type="project" value="MGI"/>
</dbReference>
<dbReference type="GO" id="GO:0097192">
    <property type="term" value="P:extrinsic apoptotic signaling pathway in absence of ligand"/>
    <property type="evidence" value="ECO:0000315"/>
    <property type="project" value="MGI"/>
</dbReference>
<dbReference type="GO" id="GO:0016264">
    <property type="term" value="P:gap junction assembly"/>
    <property type="evidence" value="ECO:0007669"/>
    <property type="project" value="Ensembl"/>
</dbReference>
<dbReference type="GO" id="GO:0007229">
    <property type="term" value="P:integrin-mediated signaling pathway"/>
    <property type="evidence" value="ECO:0000315"/>
    <property type="project" value="MGI"/>
</dbReference>
<dbReference type="GO" id="GO:0008584">
    <property type="term" value="P:male gonad development"/>
    <property type="evidence" value="ECO:0007669"/>
    <property type="project" value="Ensembl"/>
</dbReference>
<dbReference type="GO" id="GO:0043066">
    <property type="term" value="P:negative regulation of apoptotic process"/>
    <property type="evidence" value="ECO:0000315"/>
    <property type="project" value="MGI"/>
</dbReference>
<dbReference type="GO" id="GO:2000146">
    <property type="term" value="P:negative regulation of cell motility"/>
    <property type="evidence" value="ECO:0000315"/>
    <property type="project" value="MGI"/>
</dbReference>
<dbReference type="GO" id="GO:2001240">
    <property type="term" value="P:negative regulation of extrinsic apoptotic signaling pathway in absence of ligand"/>
    <property type="evidence" value="ECO:0000315"/>
    <property type="project" value="MGI"/>
</dbReference>
<dbReference type="GO" id="GO:2001045">
    <property type="term" value="P:negative regulation of integrin-mediated signaling pathway"/>
    <property type="evidence" value="ECO:0000315"/>
    <property type="project" value="MGI"/>
</dbReference>
<dbReference type="GO" id="GO:0007406">
    <property type="term" value="P:negative regulation of neuroblast proliferation"/>
    <property type="evidence" value="ECO:0000315"/>
    <property type="project" value="MGI"/>
</dbReference>
<dbReference type="GO" id="GO:1900181">
    <property type="term" value="P:negative regulation of protein localization to nucleus"/>
    <property type="evidence" value="ECO:0000315"/>
    <property type="project" value="UniProtKB"/>
</dbReference>
<dbReference type="GO" id="GO:0007405">
    <property type="term" value="P:neuroblast proliferation"/>
    <property type="evidence" value="ECO:0000315"/>
    <property type="project" value="MGI"/>
</dbReference>
<dbReference type="GO" id="GO:0042475">
    <property type="term" value="P:odontogenesis of dentin-containing tooth"/>
    <property type="evidence" value="ECO:0007669"/>
    <property type="project" value="Ensembl"/>
</dbReference>
<dbReference type="GO" id="GO:0001541">
    <property type="term" value="P:ovarian follicle development"/>
    <property type="evidence" value="ECO:0007669"/>
    <property type="project" value="Ensembl"/>
</dbReference>
<dbReference type="GO" id="GO:2001241">
    <property type="term" value="P:positive regulation of extrinsic apoptotic signaling pathway in absence of ligand"/>
    <property type="evidence" value="ECO:0000315"/>
    <property type="project" value="MGI"/>
</dbReference>
<dbReference type="GO" id="GO:0045880">
    <property type="term" value="P:positive regulation of smoothened signaling pathway"/>
    <property type="evidence" value="ECO:0000316"/>
    <property type="project" value="MGI"/>
</dbReference>
<dbReference type="GO" id="GO:0008104">
    <property type="term" value="P:protein localization"/>
    <property type="evidence" value="ECO:0000315"/>
    <property type="project" value="MGI"/>
</dbReference>
<dbReference type="GO" id="GO:0042127">
    <property type="term" value="P:regulation of cell population proliferation"/>
    <property type="evidence" value="ECO:0000316"/>
    <property type="project" value="MGI"/>
</dbReference>
<dbReference type="GO" id="GO:0043627">
    <property type="term" value="P:response to estrogen"/>
    <property type="evidence" value="ECO:0007669"/>
    <property type="project" value="Ensembl"/>
</dbReference>
<dbReference type="GO" id="GO:0007224">
    <property type="term" value="P:smoothened signaling pathway"/>
    <property type="evidence" value="ECO:0000316"/>
    <property type="project" value="MGI"/>
</dbReference>
<dbReference type="FunFam" id="1.20.120.230:FF:000006">
    <property type="entry name" value="Catenin alpha 1"/>
    <property type="match status" value="1"/>
</dbReference>
<dbReference type="FunFam" id="1.20.120.230:FF:000007">
    <property type="entry name" value="Catenin alpha 1"/>
    <property type="match status" value="1"/>
</dbReference>
<dbReference type="FunFam" id="1.20.120.230:FF:000008">
    <property type="entry name" value="Catenin alpha 1"/>
    <property type="match status" value="1"/>
</dbReference>
<dbReference type="FunFam" id="1.20.120.230:FF:000011">
    <property type="entry name" value="Catenin alpha 1"/>
    <property type="match status" value="1"/>
</dbReference>
<dbReference type="FunFam" id="1.20.120.230:FF:000012">
    <property type="entry name" value="Catenin alpha-2 isoform 1"/>
    <property type="match status" value="1"/>
</dbReference>
<dbReference type="Gene3D" id="6.10.250.2510">
    <property type="match status" value="1"/>
</dbReference>
<dbReference type="Gene3D" id="1.20.120.230">
    <property type="entry name" value="Alpha-catenin/vinculin-like"/>
    <property type="match status" value="5"/>
</dbReference>
<dbReference type="IDEAL" id="IID50072"/>
<dbReference type="InterPro" id="IPR036723">
    <property type="entry name" value="Alpha-catenin/vinculin-like_sf"/>
</dbReference>
<dbReference type="InterPro" id="IPR001033">
    <property type="entry name" value="Alpha_catenin"/>
</dbReference>
<dbReference type="InterPro" id="IPR006077">
    <property type="entry name" value="Vinculin/catenin"/>
</dbReference>
<dbReference type="InterPro" id="IPR000633">
    <property type="entry name" value="Vinculin_CS"/>
</dbReference>
<dbReference type="PANTHER" id="PTHR18914">
    <property type="entry name" value="ALPHA CATENIN"/>
    <property type="match status" value="1"/>
</dbReference>
<dbReference type="PANTHER" id="PTHR18914:SF24">
    <property type="entry name" value="CATENIN ALPHA-1"/>
    <property type="match status" value="1"/>
</dbReference>
<dbReference type="Pfam" id="PF01044">
    <property type="entry name" value="Vinculin"/>
    <property type="match status" value="1"/>
</dbReference>
<dbReference type="PRINTS" id="PR00805">
    <property type="entry name" value="ALPHACATENIN"/>
</dbReference>
<dbReference type="SUPFAM" id="SSF47220">
    <property type="entry name" value="alpha-catenin/vinculin-like"/>
    <property type="match status" value="4"/>
</dbReference>
<dbReference type="PROSITE" id="PS00663">
    <property type="entry name" value="VINCULIN_1"/>
    <property type="match status" value="1"/>
</dbReference>
<organism>
    <name type="scientific">Mus musculus</name>
    <name type="common">Mouse</name>
    <dbReference type="NCBI Taxonomy" id="10090"/>
    <lineage>
        <taxon>Eukaryota</taxon>
        <taxon>Metazoa</taxon>
        <taxon>Chordata</taxon>
        <taxon>Craniata</taxon>
        <taxon>Vertebrata</taxon>
        <taxon>Euteleostomi</taxon>
        <taxon>Mammalia</taxon>
        <taxon>Eutheria</taxon>
        <taxon>Euarchontoglires</taxon>
        <taxon>Glires</taxon>
        <taxon>Rodentia</taxon>
        <taxon>Myomorpha</taxon>
        <taxon>Muroidea</taxon>
        <taxon>Muridae</taxon>
        <taxon>Murinae</taxon>
        <taxon>Mus</taxon>
        <taxon>Mus</taxon>
    </lineage>
</organism>
<gene>
    <name evidence="20" type="primary">Ctnna1</name>
    <name type="synonym">Catna1</name>
</gene>
<comment type="function">
    <text evidence="9 13">Associates with the cytoplasmic domain of a variety of cadherins. The association of catenins to cadherins produces a complex which is linked to the actin filament network, and which seems to be of primary importance for cadherins cell-adhesion properties. Can associate with both E- and N-cadherins. Originally believed to be a stable component of E-cadherin/catenin adhesion complexes and to mediate the linkage of cadherins to the actin cytoskeleton at adherens junctions. In contrast, cortical actin was found to be much more dynamic than E-cadherin/catenin complexes and CTNNA1 was shown not to bind to F-actin when assembled in the complex suggesting a different linkage between actin and adherens junctions components. The homodimeric form may regulate actin filament assembly and inhibit actin branching by competing with the Arp2/3 complex for binding to actin filaments. Involved in the regulation of WWTR1/TAZ, YAP1 and TGFB1-dependent SMAD2 and SMAD3 nuclear accumulation (PubMed:21145499). May play a crucial role in cell differentiation.</text>
</comment>
<comment type="subunit">
    <text evidence="2 5 6 7 8 9 10 14 16">Monomer and homodimer; the monomer preferentially binds to CTNNB1 and the homodimer to actin (PubMed:16325583). Component of an cadherin:catenin adhesion complex composed of at least of CDH26, beta-catenin/CTNNB1, alpha-catenin/CTNNA1 and p120 catenin/CTNND1 (By similarity). Possible component of an E-cadherin/ catenin adhesion complex together with E-cadherin/CDH1 and beta-catenin/CTNNB1 or gamma-catenin/JUP; the complex is located to adherens junctions (PubMed:10882138, PubMed:16325582, PubMed:16325583, PubMed:18093941, PubMed:25653389, PubMed:7982500). The stable association of CTNNA1 is controversial as CTNNA1 was shown not to bind to F-actin when assembled in the complex (PubMed:16325582, PubMed:18093941). Alternatively, the CTNNA1-containing complex may be linked to F-actin by other proteins such as LIMA1 (PubMed:18093941). Binds AFDN and F-actin (PubMed:11907041). Interacts with LIMA1 (By similarity) (PubMed:18093941). Interacts with ARHGAP21 (By similarity). Interacts with AJUBA (By similarity). Interacts with vinculin/VCL (By similarity). Interacts with TJP2/ZO2 (via N-terminus) (PubMed:10026224). Interacts with TJP1/ZO1 (via N-terminus) (PubMed:10026224).</text>
</comment>
<comment type="interaction">
    <interactant intactId="EBI-647895">
        <id>P26231</id>
    </interactant>
    <interactant intactId="EBI-647895">
        <id>P26231</id>
        <label>Ctnna1</label>
    </interactant>
    <organismsDiffer>false</organismsDiffer>
    <experiments>2</experiments>
</comment>
<comment type="interaction">
    <interactant intactId="EBI-647895">
        <id>P26231</id>
    </interactant>
    <interactant intactId="EBI-397872">
        <id>Q02248</id>
        <label>Ctnnb1</label>
    </interactant>
    <organismsDiffer>false</organismsDiffer>
    <experiments>2</experiments>
</comment>
<comment type="interaction">
    <interactant intactId="EBI-647895">
        <id>P26231</id>
    </interactant>
    <interactant intactId="EBI-6654073">
        <id>O35889</id>
        <label>Afdn</label>
    </interactant>
    <organismsDiffer>true</organismsDiffer>
    <experiments>2</experiments>
</comment>
<comment type="interaction">
    <interactant intactId="EBI-647895">
        <id>P26231</id>
    </interactant>
    <interactant intactId="EBI-491549">
        <id>P35222</id>
        <label>CTNNB1</label>
    </interactant>
    <organismsDiffer>true</organismsDiffer>
    <experiments>2</experiments>
</comment>
<comment type="subcellular location">
    <subcellularLocation>
        <location evidence="9">Cytoplasm</location>
        <location evidence="9">Cytoskeleton</location>
    </subcellularLocation>
    <subcellularLocation>
        <location evidence="2">Cell junction</location>
        <location evidence="2">Adherens junction</location>
    </subcellularLocation>
    <subcellularLocation>
        <location evidence="12">Cell membrane</location>
        <topology evidence="18">Peripheral membrane protein</topology>
        <orientation evidence="9">Cytoplasmic side</orientation>
    </subcellularLocation>
    <subcellularLocation>
        <location evidence="9 12">Cell junction</location>
    </subcellularLocation>
    <subcellularLocation>
        <location evidence="3">Cytoplasm</location>
    </subcellularLocation>
    <subcellularLocation>
        <location evidence="2">Nucleus</location>
    </subcellularLocation>
    <text evidence="12">Found at cell-cell boundaries and probably at cell-matrix boundaries.</text>
</comment>
<comment type="tissue specificity">
    <text evidence="11">Expressed in cerebellum, heart, liver, small intestine, kidney and placenta (at protein level).</text>
</comment>
<comment type="PTM">
    <text evidence="2">Sumoylated.</text>
</comment>
<comment type="PTM">
    <text evidence="19">Phosphorylation seems to contribute to the strength of cell-cell adhesion rather than to the basic capacity for cell-cell adhesion.</text>
</comment>
<comment type="similarity">
    <text evidence="18">Belongs to the vinculin/alpha-catenin family.</text>
</comment>
<reference key="1">
    <citation type="journal article" date="1991" name="Proc. Natl. Acad. Sci. U.S.A.">
        <title>The uvomorulin-anchorage protein alpha catenin is a vinculin homologue.</title>
        <authorList>
            <person name="Herrenknecht K."/>
            <person name="Ozawa M."/>
            <person name="Eckerskorn C."/>
            <person name="Lottspeich F."/>
            <person name="Lenter M."/>
            <person name="Kemler R."/>
        </authorList>
    </citation>
    <scope>NUCLEOTIDE SEQUENCE [MRNA]</scope>
    <scope>PARTIAL PROTEIN SEQUENCE</scope>
    <scope>SUBCELLULAR LOCATION</scope>
    <source>
        <strain>129/Sv</strain>
    </source>
</reference>
<reference key="2">
    <citation type="journal article" date="1991" name="Cell">
        <title>The 102 kd cadherin-associated protein: similarity to vinculin and posttranscriptional regulation of expression.</title>
        <authorList>
            <person name="Nagafuchi A."/>
            <person name="Takeichi M."/>
            <person name="Tsukita S."/>
        </authorList>
    </citation>
    <scope>NUCLEOTIDE SEQUENCE [MRNA]</scope>
    <scope>TISSUE SPECIFICITY</scope>
    <source>
        <tissue>Liver</tissue>
    </source>
</reference>
<reference key="3">
    <citation type="journal article" date="2004" name="Genome Res.">
        <title>The status, quality, and expansion of the NIH full-length cDNA project: the Mammalian Gene Collection (MGC).</title>
        <authorList>
            <consortium name="The MGC Project Team"/>
        </authorList>
    </citation>
    <scope>NUCLEOTIDE SEQUENCE [LARGE SCALE MRNA]</scope>
    <source>
        <strain>C57BL/6J</strain>
        <tissue>Brain</tissue>
    </source>
</reference>
<reference key="4">
    <citation type="journal article" date="1994" name="FEBS Lett.">
        <title>Distinct cadherin-catenin complexes in Ca(2+)-dependent cell-cell adhesion.</title>
        <authorList>
            <person name="Butz S."/>
            <person name="Kemler R."/>
        </authorList>
    </citation>
    <scope>IDENTIFICATION IN AN E-CADHERIN/CATENIN ADHESION COMPLEX</scope>
</reference>
<reference key="5">
    <citation type="journal article" date="1999" name="J. Biol. Chem.">
        <title>Characterization of ZO-2 as a MAGUK family member associated with tight as well as adherens junctions with a binding affinity to occludin and alpha catenin.</title>
        <authorList>
            <person name="Itoh M."/>
            <person name="Morita K."/>
            <person name="Tsukita S."/>
        </authorList>
    </citation>
    <scope>INTERACTION WITH TJP1 AND TJP2</scope>
</reference>
<reference key="6">
    <citation type="journal article" date="2005" name="Cell">
        <title>Deconstructing the cadherin-catenin-actin complex.</title>
        <authorList>
            <person name="Yamada S."/>
            <person name="Pokutta S."/>
            <person name="Drees F."/>
            <person name="Weis W.I."/>
            <person name="Nelson W.J."/>
        </authorList>
    </citation>
    <scope>RECONSTITUTION OF THE E-CADHERIN/CATENIN ADHESION COMPLEX</scope>
    <scope>LACK OF ACTIN BINDING BY THE E-CADHERIN/CATENIN ADHESION COMPLEX</scope>
</reference>
<reference key="7">
    <citation type="journal article" date="2005" name="Cell">
        <title>Alpha-catenin is a molecular switch that binds E-cadherin-beta-catenin and regulates actin-filament assembly.</title>
        <authorList>
            <person name="Drees F."/>
            <person name="Pokutta S."/>
            <person name="Yamada S."/>
            <person name="Nelson W.J."/>
            <person name="Weis W.I."/>
        </authorList>
    </citation>
    <scope>FUNCTION</scope>
    <scope>SUBUNIT</scope>
    <scope>SUBCELLULAR LOCATION</scope>
</reference>
<reference key="8">
    <citation type="journal article" date="2008" name="J. Proteome Res.">
        <title>Specific phosphopeptide enrichment with immobilized titanium ion affinity chromatography adsorbent for phosphoproteome analysis.</title>
        <authorList>
            <person name="Zhou H."/>
            <person name="Ye M."/>
            <person name="Dong J."/>
            <person name="Han G."/>
            <person name="Jiang X."/>
            <person name="Wu R."/>
            <person name="Zou H."/>
        </authorList>
    </citation>
    <scope>PHOSPHORYLATION [LARGE SCALE ANALYSIS] AT SER-641</scope>
    <scope>IDENTIFICATION BY MASS SPECTROMETRY [LARGE SCALE ANALYSIS]</scope>
    <source>
        <tissue>Liver</tissue>
    </source>
</reference>
<reference key="9">
    <citation type="journal article" date="2008" name="Proc. Natl. Acad. Sci. U.S.A.">
        <title>EPLIN mediates linkage of the cadherin catenin complex to F-actin and stabilizes the circumferential actin belt.</title>
        <authorList>
            <person name="Abe K."/>
            <person name="Takeichi M."/>
        </authorList>
    </citation>
    <scope>INTERACTION WITH LIMA1</scope>
    <scope>LACK OF ACTIN BINDING BY THE E-CADHERIN/CATENIN ADHESION COMPLEX</scope>
</reference>
<reference key="10">
    <citation type="journal article" date="2009" name="Mol. Cell. Proteomics">
        <title>Large scale localization of protein phosphorylation by use of electron capture dissociation mass spectrometry.</title>
        <authorList>
            <person name="Sweet S.M."/>
            <person name="Bailey C.M."/>
            <person name="Cunningham D.L."/>
            <person name="Heath J.K."/>
            <person name="Cooper H.J."/>
        </authorList>
    </citation>
    <scope>PHOSPHORYLATION [LARGE SCALE ANALYSIS] AT SER-641</scope>
    <scope>IDENTIFICATION BY MASS SPECTROMETRY [LARGE SCALE ANALYSIS]</scope>
    <source>
        <tissue>Embryonic fibroblast</tissue>
    </source>
</reference>
<reference key="11">
    <citation type="journal article" date="2010" name="Cell">
        <title>A tissue-specific atlas of mouse protein phosphorylation and expression.</title>
        <authorList>
            <person name="Huttlin E.L."/>
            <person name="Jedrychowski M.P."/>
            <person name="Elias J.E."/>
            <person name="Goswami T."/>
            <person name="Rad R."/>
            <person name="Beausoleil S.A."/>
            <person name="Villen J."/>
            <person name="Haas W."/>
            <person name="Sowa M.E."/>
            <person name="Gygi S.P."/>
        </authorList>
    </citation>
    <scope>PHOSPHORYLATION [LARGE SCALE ANALYSIS] AT THR-634; SER-641; THR-645; SER-652; SER-655 AND THR-658</scope>
    <scope>IDENTIFICATION BY MASS SPECTROMETRY [LARGE SCALE ANALYSIS]</scope>
    <source>
        <tissue>Brain</tissue>
        <tissue>Brown adipose tissue</tissue>
        <tissue>Heart</tissue>
        <tissue>Kidney</tissue>
        <tissue>Liver</tissue>
        <tissue>Lung</tissue>
        <tissue>Pancreas</tissue>
        <tissue>Spleen</tissue>
        <tissue>Testis</tissue>
    </source>
</reference>
<reference key="12">
    <citation type="journal article" date="2010" name="Dev. Cell">
        <title>The Crumbs complex couples cell density sensing to Hippo-dependent control of the TGF-beta-SMAD pathway.</title>
        <authorList>
            <person name="Varelas X."/>
            <person name="Samavarchi-Tehrani P."/>
            <person name="Narimatsu M."/>
            <person name="Weiss A."/>
            <person name="Cockburn K."/>
            <person name="Larsen B.G."/>
            <person name="Rossant J."/>
            <person name="Wrana J.L."/>
        </authorList>
    </citation>
    <scope>FUNCTION</scope>
</reference>
<reference key="13">
    <citation type="journal article" date="2015" name="J. Cell Sci.">
        <title>alpha-Catenin phosphorylation promotes intercellular adhesion through a dual-kinase mechanism.</title>
        <authorList>
            <person name="Escobar D.J."/>
            <person name="Desai R."/>
            <person name="Ishiyama N."/>
            <person name="Folmsbee S.S."/>
            <person name="Novak M.N."/>
            <person name="Flozak A.S."/>
            <person name="Daugherty R.L."/>
            <person name="Mo R."/>
            <person name="Nanavati D."/>
            <person name="Sarpal R."/>
            <person name="Leckband D."/>
            <person name="Ikura M."/>
            <person name="Tepass U."/>
            <person name="Gottardi C.J."/>
        </authorList>
    </citation>
    <scope>IDENTIFICATION IN AN E-CADHERIN/CATENIN ADHESION COMPLEX</scope>
    <scope>PHOSPHORYLATION</scope>
    <scope>MUTAGENESIS OF 641-SER--THR-658 AND SER-641</scope>
</reference>
<reference key="14">
    <citation type="journal article" date="2016" name="Nat. Genet.">
        <title>Mutations in CTNNA1 cause butterfly-shaped pigment dystrophy and perturbed retinal pigment epithelium integrity.</title>
        <authorList>
            <person name="Saksens N.T."/>
            <person name="Krebs M.P."/>
            <person name="Schoenmaker-Koller F.E."/>
            <person name="Hicks W."/>
            <person name="Yu M."/>
            <person name="Shi L."/>
            <person name="Rowe L."/>
            <person name="Collin G.B."/>
            <person name="Charette J.R."/>
            <person name="Letteboer S.J."/>
            <person name="Neveling K."/>
            <person name="van Moorsel T.W."/>
            <person name="Abu-Ltaif S."/>
            <person name="De Baere E."/>
            <person name="Walraedt S."/>
            <person name="Banfi S."/>
            <person name="Simonelli F."/>
            <person name="Cremers F.P."/>
            <person name="Boon C.J."/>
            <person name="Roepman R."/>
            <person name="Leroy B.P."/>
            <person name="Peachey N.S."/>
            <person name="Hoyng C.B."/>
            <person name="Nishina P.M."/>
            <person name="den Hollander A.I."/>
        </authorList>
    </citation>
    <scope>MUTAGENESIS OF LEU-436</scope>
</reference>
<reference key="15">
    <citation type="journal article" date="2000" name="Mol. Cell">
        <title>Structure of the dimerization and beta-catenin-binding region of alpha-catenin.</title>
        <authorList>
            <person name="Pokutta S."/>
            <person name="Weis W.I."/>
        </authorList>
    </citation>
    <scope>X-RAY CRYSTALLOGRAPHY (3.0 ANGSTROMS) OF 57-261 IN COMPLEX WITH CTNNB1</scope>
</reference>
<reference key="16">
    <citation type="journal article" date="2002" name="J. Biol. Chem.">
        <title>Biochemical and structural definition of the l-afadin- and actin-binding sites of alpha-catenin.</title>
        <authorList>
            <person name="Pokutta S."/>
            <person name="Drees F."/>
            <person name="Takai Y."/>
            <person name="Nelson W.J."/>
            <person name="Weis W.I."/>
        </authorList>
    </citation>
    <scope>X-RAY CRYSTALLOGRAPHY (2.5 ANGSTROMS) OF 385-651</scope>
    <scope>INTERACTION WITH AFDN AND F-ACTIN</scope>
</reference>
<name>CTNA1_MOUSE</name>
<keyword id="KW-0002">3D-structure</keyword>
<keyword id="KW-0007">Acetylation</keyword>
<keyword id="KW-0130">Cell adhesion</keyword>
<keyword id="KW-0965">Cell junction</keyword>
<keyword id="KW-1003">Cell membrane</keyword>
<keyword id="KW-0963">Cytoplasm</keyword>
<keyword id="KW-0206">Cytoskeleton</keyword>
<keyword id="KW-0903">Direct protein sequencing</keyword>
<keyword id="KW-1017">Isopeptide bond</keyword>
<keyword id="KW-0472">Membrane</keyword>
<keyword id="KW-0539">Nucleus</keyword>
<keyword id="KW-0597">Phosphoprotein</keyword>
<keyword id="KW-1185">Reference proteome</keyword>
<keyword id="KW-0832">Ubl conjugation</keyword>
<protein>
    <recommendedName>
        <fullName evidence="20">Catenin alpha-1</fullName>
    </recommendedName>
    <alternativeName>
        <fullName evidence="17">102 kDa cadherin-associated protein</fullName>
        <shortName evidence="17">CAP102</shortName>
    </alternativeName>
    <alternativeName>
        <fullName evidence="20">Alpha E-catenin</fullName>
    </alternativeName>
</protein>
<evidence type="ECO:0000250" key="1"/>
<evidence type="ECO:0000250" key="2">
    <source>
        <dbReference type="UniProtKB" id="P35221"/>
    </source>
</evidence>
<evidence type="ECO:0000250" key="3">
    <source>
        <dbReference type="UniProtKB" id="Q9PVF8"/>
    </source>
</evidence>
<evidence type="ECO:0000256" key="4">
    <source>
        <dbReference type="SAM" id="MobiDB-lite"/>
    </source>
</evidence>
<evidence type="ECO:0000269" key="5">
    <source>
    </source>
</evidence>
<evidence type="ECO:0000269" key="6">
    <source>
    </source>
</evidence>
<evidence type="ECO:0000269" key="7">
    <source>
    </source>
</evidence>
<evidence type="ECO:0000269" key="8">
    <source>
    </source>
</evidence>
<evidence type="ECO:0000269" key="9">
    <source>
    </source>
</evidence>
<evidence type="ECO:0000269" key="10">
    <source>
    </source>
</evidence>
<evidence type="ECO:0000269" key="11">
    <source>
    </source>
</evidence>
<evidence type="ECO:0000269" key="12">
    <source>
    </source>
</evidence>
<evidence type="ECO:0000269" key="13">
    <source>
    </source>
</evidence>
<evidence type="ECO:0000269" key="14">
    <source>
    </source>
</evidence>
<evidence type="ECO:0000269" key="15">
    <source>
    </source>
</evidence>
<evidence type="ECO:0000269" key="16">
    <source>
    </source>
</evidence>
<evidence type="ECO:0000303" key="17">
    <source>
    </source>
</evidence>
<evidence type="ECO:0000305" key="18"/>
<evidence type="ECO:0000305" key="19">
    <source>
    </source>
</evidence>
<evidence type="ECO:0000312" key="20">
    <source>
        <dbReference type="MGI" id="MGI:88274"/>
    </source>
</evidence>
<evidence type="ECO:0007744" key="21">
    <source>
    </source>
</evidence>
<evidence type="ECO:0007744" key="22">
    <source>
    </source>
</evidence>
<evidence type="ECO:0007744" key="23">
    <source>
    </source>
</evidence>
<evidence type="ECO:0007829" key="24">
    <source>
        <dbReference type="PDB" id="1DOW"/>
    </source>
</evidence>
<evidence type="ECO:0007829" key="25">
    <source>
        <dbReference type="PDB" id="1L7C"/>
    </source>
</evidence>
<evidence type="ECO:0007829" key="26">
    <source>
        <dbReference type="PDB" id="4E17"/>
    </source>
</evidence>
<evidence type="ECO:0007829" key="27">
    <source>
        <dbReference type="PDB" id="4E18"/>
    </source>
</evidence>
<evidence type="ECO:0007829" key="28">
    <source>
        <dbReference type="PDB" id="5Y04"/>
    </source>
</evidence>
<evidence type="ECO:0007829" key="29">
    <source>
        <dbReference type="PDB" id="6DV1"/>
    </source>
</evidence>
<proteinExistence type="evidence at protein level"/>
<accession>P26231</accession>